<reference key="1">
    <citation type="submission" date="2007-03" db="EMBL/GenBank/DDBJ databases">
        <title>Genome sequence of Rhodospirillum centenum.</title>
        <authorList>
            <person name="Touchman J.W."/>
            <person name="Bauer C."/>
            <person name="Blankenship R.E."/>
        </authorList>
    </citation>
    <scope>NUCLEOTIDE SEQUENCE [LARGE SCALE GENOMIC DNA]</scope>
    <source>
        <strain>ATCC 51521 / SW</strain>
    </source>
</reference>
<gene>
    <name evidence="1" type="primary">hisC</name>
    <name type="ordered locus">RC1_4085</name>
</gene>
<sequence>MSGPIPNPGILDIAPYVGGEHSAPGVTRLLRLASNEGALGPSPRAVEAFRAVGPEIHRYPDGGSTRLREAIGHRFGLDPARVLCFNGSDEVLHLLAQAYAGPGGEVLYSRHGFLVYPIAARAAGATPVAAPERNLTTDVDALLARVSERTRIVYVANPNNPTGSYLPADALARLHAGLPPHVLLVIDAAYAEYVTANDYADGTALVARFDNVVMTRTFSKLFGLGGMRLGWAYCPPAVADALHRVRSPFNVSVAAQAAGVAALEDLEFQERSRALNEQSRTAFTGRVRALGLVVHPSVCNFVLVDFAATGRPAEEARQFLKARGILVRQMGAYGLPDCLRITMGLPAEMEEVADALGDWLKG</sequence>
<name>HIS8_RHOCS</name>
<keyword id="KW-0028">Amino-acid biosynthesis</keyword>
<keyword id="KW-0032">Aminotransferase</keyword>
<keyword id="KW-0368">Histidine biosynthesis</keyword>
<keyword id="KW-0663">Pyridoxal phosphate</keyword>
<keyword id="KW-1185">Reference proteome</keyword>
<keyword id="KW-0808">Transferase</keyword>
<evidence type="ECO:0000255" key="1">
    <source>
        <dbReference type="HAMAP-Rule" id="MF_01023"/>
    </source>
</evidence>
<feature type="chain" id="PRO_1000135414" description="Histidinol-phosphate aminotransferase">
    <location>
        <begin position="1"/>
        <end position="362"/>
    </location>
</feature>
<feature type="modified residue" description="N6-(pyridoxal phosphate)lysine" evidence="1">
    <location>
        <position position="220"/>
    </location>
</feature>
<proteinExistence type="inferred from homology"/>
<organism>
    <name type="scientific">Rhodospirillum centenum (strain ATCC 51521 / SW)</name>
    <dbReference type="NCBI Taxonomy" id="414684"/>
    <lineage>
        <taxon>Bacteria</taxon>
        <taxon>Pseudomonadati</taxon>
        <taxon>Pseudomonadota</taxon>
        <taxon>Alphaproteobacteria</taxon>
        <taxon>Rhodospirillales</taxon>
        <taxon>Rhodospirillaceae</taxon>
        <taxon>Rhodospirillum</taxon>
    </lineage>
</organism>
<accession>B6IYQ0</accession>
<protein>
    <recommendedName>
        <fullName evidence="1">Histidinol-phosphate aminotransferase</fullName>
        <ecNumber evidence="1">2.6.1.9</ecNumber>
    </recommendedName>
    <alternativeName>
        <fullName evidence="1">Imidazole acetol-phosphate transaminase</fullName>
    </alternativeName>
</protein>
<dbReference type="EC" id="2.6.1.9" evidence="1"/>
<dbReference type="EMBL" id="CP000613">
    <property type="protein sequence ID" value="ACJ01424.1"/>
    <property type="molecule type" value="Genomic_DNA"/>
</dbReference>
<dbReference type="RefSeq" id="WP_012569197.1">
    <property type="nucleotide sequence ID" value="NC_011420.2"/>
</dbReference>
<dbReference type="SMR" id="B6IYQ0"/>
<dbReference type="STRING" id="414684.RC1_4085"/>
<dbReference type="KEGG" id="rce:RC1_4085"/>
<dbReference type="eggNOG" id="COG0079">
    <property type="taxonomic scope" value="Bacteria"/>
</dbReference>
<dbReference type="HOGENOM" id="CLU_017584_3_3_5"/>
<dbReference type="OrthoDB" id="9809616at2"/>
<dbReference type="UniPathway" id="UPA00031">
    <property type="reaction ID" value="UER00012"/>
</dbReference>
<dbReference type="Proteomes" id="UP000001591">
    <property type="component" value="Chromosome"/>
</dbReference>
<dbReference type="GO" id="GO:0004400">
    <property type="term" value="F:histidinol-phosphate transaminase activity"/>
    <property type="evidence" value="ECO:0007669"/>
    <property type="project" value="UniProtKB-UniRule"/>
</dbReference>
<dbReference type="GO" id="GO:0030170">
    <property type="term" value="F:pyridoxal phosphate binding"/>
    <property type="evidence" value="ECO:0007669"/>
    <property type="project" value="InterPro"/>
</dbReference>
<dbReference type="GO" id="GO:0000105">
    <property type="term" value="P:L-histidine biosynthetic process"/>
    <property type="evidence" value="ECO:0007669"/>
    <property type="project" value="UniProtKB-UniRule"/>
</dbReference>
<dbReference type="CDD" id="cd00609">
    <property type="entry name" value="AAT_like"/>
    <property type="match status" value="1"/>
</dbReference>
<dbReference type="Gene3D" id="3.90.1150.10">
    <property type="entry name" value="Aspartate Aminotransferase, domain 1"/>
    <property type="match status" value="1"/>
</dbReference>
<dbReference type="Gene3D" id="3.40.640.10">
    <property type="entry name" value="Type I PLP-dependent aspartate aminotransferase-like (Major domain)"/>
    <property type="match status" value="1"/>
</dbReference>
<dbReference type="HAMAP" id="MF_01023">
    <property type="entry name" value="HisC_aminotrans_2"/>
    <property type="match status" value="1"/>
</dbReference>
<dbReference type="InterPro" id="IPR004839">
    <property type="entry name" value="Aminotransferase_I/II_large"/>
</dbReference>
<dbReference type="InterPro" id="IPR005861">
    <property type="entry name" value="HisP_aminotrans"/>
</dbReference>
<dbReference type="InterPro" id="IPR050106">
    <property type="entry name" value="HistidinolP_aminotransfase"/>
</dbReference>
<dbReference type="InterPro" id="IPR015424">
    <property type="entry name" value="PyrdxlP-dep_Trfase"/>
</dbReference>
<dbReference type="InterPro" id="IPR015421">
    <property type="entry name" value="PyrdxlP-dep_Trfase_major"/>
</dbReference>
<dbReference type="InterPro" id="IPR015422">
    <property type="entry name" value="PyrdxlP-dep_Trfase_small"/>
</dbReference>
<dbReference type="NCBIfam" id="TIGR01141">
    <property type="entry name" value="hisC"/>
    <property type="match status" value="1"/>
</dbReference>
<dbReference type="PANTHER" id="PTHR43643:SF3">
    <property type="entry name" value="HISTIDINOL-PHOSPHATE AMINOTRANSFERASE"/>
    <property type="match status" value="1"/>
</dbReference>
<dbReference type="PANTHER" id="PTHR43643">
    <property type="entry name" value="HISTIDINOL-PHOSPHATE AMINOTRANSFERASE 2"/>
    <property type="match status" value="1"/>
</dbReference>
<dbReference type="Pfam" id="PF00155">
    <property type="entry name" value="Aminotran_1_2"/>
    <property type="match status" value="1"/>
</dbReference>
<dbReference type="SUPFAM" id="SSF53383">
    <property type="entry name" value="PLP-dependent transferases"/>
    <property type="match status" value="1"/>
</dbReference>
<comment type="catalytic activity">
    <reaction evidence="1">
        <text>L-histidinol phosphate + 2-oxoglutarate = 3-(imidazol-4-yl)-2-oxopropyl phosphate + L-glutamate</text>
        <dbReference type="Rhea" id="RHEA:23744"/>
        <dbReference type="ChEBI" id="CHEBI:16810"/>
        <dbReference type="ChEBI" id="CHEBI:29985"/>
        <dbReference type="ChEBI" id="CHEBI:57766"/>
        <dbReference type="ChEBI" id="CHEBI:57980"/>
        <dbReference type="EC" id="2.6.1.9"/>
    </reaction>
</comment>
<comment type="cofactor">
    <cofactor evidence="1">
        <name>pyridoxal 5'-phosphate</name>
        <dbReference type="ChEBI" id="CHEBI:597326"/>
    </cofactor>
</comment>
<comment type="pathway">
    <text evidence="1">Amino-acid biosynthesis; L-histidine biosynthesis; L-histidine from 5-phospho-alpha-D-ribose 1-diphosphate: step 7/9.</text>
</comment>
<comment type="subunit">
    <text evidence="1">Homodimer.</text>
</comment>
<comment type="similarity">
    <text evidence="1">Belongs to the class-II pyridoxal-phosphate-dependent aminotransferase family. Histidinol-phosphate aminotransferase subfamily.</text>
</comment>